<reference key="1">
    <citation type="journal article" date="2014" name="Genome Announc.">
        <title>Complete sequencing and chromosome-scale genome assembly of the industrial progenitor strain P2niaD18 from the penicillin producer Penicillium chrysogenum.</title>
        <authorList>
            <person name="Specht T."/>
            <person name="Dahlmann T.A."/>
            <person name="Zadra I."/>
            <person name="Kuernsteiner H."/>
            <person name="Kueck U."/>
        </authorList>
    </citation>
    <scope>NUCLEOTIDE SEQUENCE [LARGE SCALE GENOMIC DNA]</scope>
    <source>
        <strain>P2niaD18</strain>
    </source>
</reference>
<protein>
    <recommendedName>
        <fullName evidence="1">Subtilisin-like serine protease EN45_076310</fullName>
        <ecNumber evidence="1">3.4.21.-</ecNumber>
    </recommendedName>
    <alternativeName>
        <fullName evidence="1">Alkaline serine protease</fullName>
    </alternativeName>
</protein>
<gene>
    <name type="ORF">EN45_076310</name>
</gene>
<organism>
    <name type="scientific">Penicillium chrysogenum</name>
    <name type="common">Penicillium notatum</name>
    <dbReference type="NCBI Taxonomy" id="5076"/>
    <lineage>
        <taxon>Eukaryota</taxon>
        <taxon>Fungi</taxon>
        <taxon>Dikarya</taxon>
        <taxon>Ascomycota</taxon>
        <taxon>Pezizomycotina</taxon>
        <taxon>Eurotiomycetes</taxon>
        <taxon>Eurotiomycetidae</taxon>
        <taxon>Eurotiales</taxon>
        <taxon>Aspergillaceae</taxon>
        <taxon>Penicillium</taxon>
        <taxon>Penicillium chrysogenum species complex</taxon>
    </lineage>
</organism>
<sequence length="398" mass="40362">MGFLKLLSTSLATLAVVNAGKLLTANDGDEVVPSSYIVVMNDGVSTAQFETHRNWAANVHARTRSLKGGESGPGKHFDINGMKGYSASFDDRTVKDIASDPTVKYVEPDMVVNATANVVQRNAPSWGLSRISSKKSGATDYVYDSTAGEGIVIYGVDTGIDIGHADFGGRAEWGTNTADNDDTDGNGHGTHTASTAAGSKFGVAKKASVVAVKVLGADGSGTNSQVIAGMDWAVKDSKSRGATGKSVMNMSLGGAYSRAMNDAAANVVRSGVFLSVAAGNEAQDASNSSPASAPNVCTIAASTNSDGSASFTNFGSVVDLYAPGKDITAAYPGGGSKTLSGTSMAAPHVAGAAAYLMALEGVTSDKACARIVELAISSISSAPSGTTSKLLYNGINAQ</sequence>
<keyword id="KW-0325">Glycoprotein</keyword>
<keyword id="KW-0378">Hydrolase</keyword>
<keyword id="KW-0389">IgE-binding protein</keyword>
<keyword id="KW-0645">Protease</keyword>
<keyword id="KW-0964">Secreted</keyword>
<keyword id="KW-0720">Serine protease</keyword>
<keyword id="KW-0732">Signal</keyword>
<keyword id="KW-0865">Zymogen</keyword>
<proteinExistence type="inferred from homology"/>
<evidence type="ECO:0000250" key="1">
    <source>
        <dbReference type="UniProtKB" id="P9WEW3"/>
    </source>
</evidence>
<evidence type="ECO:0000250" key="2">
    <source>
        <dbReference type="UniProtKB" id="Q5JIZ5"/>
    </source>
</evidence>
<evidence type="ECO:0000255" key="3"/>
<evidence type="ECO:0000255" key="4">
    <source>
        <dbReference type="PROSITE-ProRule" id="PRU00498"/>
    </source>
</evidence>
<evidence type="ECO:0000255" key="5">
    <source>
        <dbReference type="PROSITE-ProRule" id="PRU01240"/>
    </source>
</evidence>
<evidence type="ECO:0000256" key="6">
    <source>
        <dbReference type="SAM" id="MobiDB-lite"/>
    </source>
</evidence>
<evidence type="ECO:0000305" key="7"/>
<accession>P9WEW4</accession>
<accession>Q8NKG0</accession>
<feature type="signal peptide" evidence="3">
    <location>
        <begin position="1"/>
        <end position="19"/>
    </location>
</feature>
<feature type="propeptide" id="PRO_0000451343" description="Removed in mature form" evidence="1 3">
    <location>
        <begin position="20"/>
        <end position="115"/>
    </location>
</feature>
<feature type="chain" id="PRO_0000451344" description="Subtilisin-like serine protease EN45_076310" evidence="1">
    <location>
        <begin position="116"/>
        <end position="398"/>
    </location>
</feature>
<feature type="domain" description="Inhibitor I9" evidence="3">
    <location>
        <begin position="35"/>
        <end position="113"/>
    </location>
</feature>
<feature type="domain" description="Peptidase S8" evidence="5">
    <location>
        <begin position="125"/>
        <end position="398"/>
    </location>
</feature>
<feature type="region of interest" description="IgE-binding" evidence="1">
    <location>
        <begin position="124"/>
        <end position="134"/>
    </location>
</feature>
<feature type="region of interest" description="IgE-binding" evidence="1">
    <location>
        <begin position="163"/>
        <end position="170"/>
    </location>
</feature>
<feature type="region of interest" description="Disordered" evidence="6">
    <location>
        <begin position="175"/>
        <end position="195"/>
    </location>
</feature>
<feature type="region of interest" description="IgE-binding" evidence="1">
    <location>
        <begin position="227"/>
        <end position="245"/>
    </location>
</feature>
<feature type="region of interest" description="IgE-binding" evidence="1">
    <location>
        <begin position="310"/>
        <end position="318"/>
    </location>
</feature>
<feature type="active site" description="Charge relay system" evidence="5">
    <location>
        <position position="157"/>
    </location>
</feature>
<feature type="active site" description="Charge relay system" evidence="5">
    <location>
        <position position="188"/>
    </location>
</feature>
<feature type="active site" description="Charge relay system" evidence="5">
    <location>
        <position position="343"/>
    </location>
</feature>
<feature type="site" description="Important for catalytic activity" evidence="2">
    <location>
        <position position="280"/>
    </location>
</feature>
<feature type="glycosylation site" description="N-linked (GlcNAc...) asparagine" evidence="4">
    <location>
        <position position="113"/>
    </location>
</feature>
<feature type="glycosylation site" description="N-linked (GlcNAc...) asparagine" evidence="4">
    <location>
        <position position="249"/>
    </location>
</feature>
<name>PCH13_PENCH</name>
<dbReference type="EC" id="3.4.21.-" evidence="1"/>
<dbReference type="EMBL" id="CM002799">
    <property type="protein sequence ID" value="KZN89038.1"/>
    <property type="molecule type" value="Genomic_DNA"/>
</dbReference>
<dbReference type="SMR" id="P9WEW4"/>
<dbReference type="OMA" id="INAPDVW"/>
<dbReference type="Proteomes" id="UP000076449">
    <property type="component" value="Chromosome ii"/>
</dbReference>
<dbReference type="GO" id="GO:0005576">
    <property type="term" value="C:extracellular region"/>
    <property type="evidence" value="ECO:0007669"/>
    <property type="project" value="UniProtKB-SubCell"/>
</dbReference>
<dbReference type="GO" id="GO:0019863">
    <property type="term" value="F:IgE binding"/>
    <property type="evidence" value="ECO:0007669"/>
    <property type="project" value="UniProtKB-KW"/>
</dbReference>
<dbReference type="GO" id="GO:0004252">
    <property type="term" value="F:serine-type endopeptidase activity"/>
    <property type="evidence" value="ECO:0007669"/>
    <property type="project" value="InterPro"/>
</dbReference>
<dbReference type="GO" id="GO:0006508">
    <property type="term" value="P:proteolysis"/>
    <property type="evidence" value="ECO:0007669"/>
    <property type="project" value="UniProtKB-KW"/>
</dbReference>
<dbReference type="CDD" id="cd04077">
    <property type="entry name" value="Peptidases_S8_PCSK9_ProteinaseK_like"/>
    <property type="match status" value="1"/>
</dbReference>
<dbReference type="FunFam" id="3.40.50.200:FF:000014">
    <property type="entry name" value="Proteinase K"/>
    <property type="match status" value="1"/>
</dbReference>
<dbReference type="Gene3D" id="3.30.70.80">
    <property type="entry name" value="Peptidase S8 propeptide/proteinase inhibitor I9"/>
    <property type="match status" value="1"/>
</dbReference>
<dbReference type="Gene3D" id="3.40.50.200">
    <property type="entry name" value="Peptidase S8/S53 domain"/>
    <property type="match status" value="1"/>
</dbReference>
<dbReference type="InterPro" id="IPR034193">
    <property type="entry name" value="PCSK9_ProteinaseK-like"/>
</dbReference>
<dbReference type="InterPro" id="IPR000209">
    <property type="entry name" value="Peptidase_S8/S53_dom"/>
</dbReference>
<dbReference type="InterPro" id="IPR036852">
    <property type="entry name" value="Peptidase_S8/S53_dom_sf"/>
</dbReference>
<dbReference type="InterPro" id="IPR023828">
    <property type="entry name" value="Peptidase_S8_Ser-AS"/>
</dbReference>
<dbReference type="InterPro" id="IPR050131">
    <property type="entry name" value="Peptidase_S8_subtilisin-like"/>
</dbReference>
<dbReference type="InterPro" id="IPR015500">
    <property type="entry name" value="Peptidase_S8_subtilisin-rel"/>
</dbReference>
<dbReference type="InterPro" id="IPR010259">
    <property type="entry name" value="S8pro/Inhibitor_I9"/>
</dbReference>
<dbReference type="InterPro" id="IPR037045">
    <property type="entry name" value="S8pro/Inhibitor_I9_sf"/>
</dbReference>
<dbReference type="PANTHER" id="PTHR43806:SF58">
    <property type="entry name" value="ALKALINE PROTEASE 1-RELATED"/>
    <property type="match status" value="1"/>
</dbReference>
<dbReference type="PANTHER" id="PTHR43806">
    <property type="entry name" value="PEPTIDASE S8"/>
    <property type="match status" value="1"/>
</dbReference>
<dbReference type="Pfam" id="PF05922">
    <property type="entry name" value="Inhibitor_I9"/>
    <property type="match status" value="1"/>
</dbReference>
<dbReference type="Pfam" id="PF00082">
    <property type="entry name" value="Peptidase_S8"/>
    <property type="match status" value="1"/>
</dbReference>
<dbReference type="PRINTS" id="PR00723">
    <property type="entry name" value="SUBTILISIN"/>
</dbReference>
<dbReference type="SUPFAM" id="SSF54897">
    <property type="entry name" value="Protease propeptides/inhibitors"/>
    <property type="match status" value="1"/>
</dbReference>
<dbReference type="SUPFAM" id="SSF52743">
    <property type="entry name" value="Subtilisin-like"/>
    <property type="match status" value="1"/>
</dbReference>
<dbReference type="PROSITE" id="PS51892">
    <property type="entry name" value="SUBTILASE"/>
    <property type="match status" value="1"/>
</dbReference>
<dbReference type="PROSITE" id="PS00138">
    <property type="entry name" value="SUBTILASE_SER"/>
    <property type="match status" value="1"/>
</dbReference>
<comment type="function">
    <text evidence="1">Serine protease that hydrolyzes casein, gelatin and human collagen type IV, but not elastin in vitro (By similarity). Hydrolyzes OCLN of the human lung epithelial cells at 202-Gln-|-Ser-203 and Gln-211-|-Ile-212 (By similarity).</text>
</comment>
<comment type="activity regulation">
    <text evidence="1">Inhibited by phenylmethanesulfonyl fluoride (PMSF) and diethyl pyrocarbonate (DEPC), but not by benzamidine.</text>
</comment>
<comment type="subcellular location">
    <subcellularLocation>
        <location evidence="1">Secreted</location>
    </subcellularLocation>
</comment>
<comment type="similarity">
    <text evidence="7">Belongs to the peptidase S8 family.</text>
</comment>